<reference key="1">
    <citation type="journal article" date="2004" name="Nature">
        <title>The sequence and analysis of duplication-rich human chromosome 16.</title>
        <authorList>
            <person name="Martin J."/>
            <person name="Han C."/>
            <person name="Gordon L.A."/>
            <person name="Terry A."/>
            <person name="Prabhakar S."/>
            <person name="She X."/>
            <person name="Xie G."/>
            <person name="Hellsten U."/>
            <person name="Chan Y.M."/>
            <person name="Altherr M."/>
            <person name="Couronne O."/>
            <person name="Aerts A."/>
            <person name="Bajorek E."/>
            <person name="Black S."/>
            <person name="Blumer H."/>
            <person name="Branscomb E."/>
            <person name="Brown N.C."/>
            <person name="Bruno W.J."/>
            <person name="Buckingham J.M."/>
            <person name="Callen D.F."/>
            <person name="Campbell C.S."/>
            <person name="Campbell M.L."/>
            <person name="Campbell E.W."/>
            <person name="Caoile C."/>
            <person name="Challacombe J.F."/>
            <person name="Chasteen L.A."/>
            <person name="Chertkov O."/>
            <person name="Chi H.C."/>
            <person name="Christensen M."/>
            <person name="Clark L.M."/>
            <person name="Cohn J.D."/>
            <person name="Denys M."/>
            <person name="Detter J.C."/>
            <person name="Dickson M."/>
            <person name="Dimitrijevic-Bussod M."/>
            <person name="Escobar J."/>
            <person name="Fawcett J.J."/>
            <person name="Flowers D."/>
            <person name="Fotopulos D."/>
            <person name="Glavina T."/>
            <person name="Gomez M."/>
            <person name="Gonzales E."/>
            <person name="Goodstein D."/>
            <person name="Goodwin L.A."/>
            <person name="Grady D.L."/>
            <person name="Grigoriev I."/>
            <person name="Groza M."/>
            <person name="Hammon N."/>
            <person name="Hawkins T."/>
            <person name="Haydu L."/>
            <person name="Hildebrand C.E."/>
            <person name="Huang W."/>
            <person name="Israni S."/>
            <person name="Jett J."/>
            <person name="Jewett P.B."/>
            <person name="Kadner K."/>
            <person name="Kimball H."/>
            <person name="Kobayashi A."/>
            <person name="Krawczyk M.-C."/>
            <person name="Leyba T."/>
            <person name="Longmire J.L."/>
            <person name="Lopez F."/>
            <person name="Lou Y."/>
            <person name="Lowry S."/>
            <person name="Ludeman T."/>
            <person name="Manohar C.F."/>
            <person name="Mark G.A."/>
            <person name="McMurray K.L."/>
            <person name="Meincke L.J."/>
            <person name="Morgan J."/>
            <person name="Moyzis R.K."/>
            <person name="Mundt M.O."/>
            <person name="Munk A.C."/>
            <person name="Nandkeshwar R.D."/>
            <person name="Pitluck S."/>
            <person name="Pollard M."/>
            <person name="Predki P."/>
            <person name="Parson-Quintana B."/>
            <person name="Ramirez L."/>
            <person name="Rash S."/>
            <person name="Retterer J."/>
            <person name="Ricke D.O."/>
            <person name="Robinson D.L."/>
            <person name="Rodriguez A."/>
            <person name="Salamov A."/>
            <person name="Saunders E.H."/>
            <person name="Scott D."/>
            <person name="Shough T."/>
            <person name="Stallings R.L."/>
            <person name="Stalvey M."/>
            <person name="Sutherland R.D."/>
            <person name="Tapia R."/>
            <person name="Tesmer J.G."/>
            <person name="Thayer N."/>
            <person name="Thompson L.S."/>
            <person name="Tice H."/>
            <person name="Torney D.C."/>
            <person name="Tran-Gyamfi M."/>
            <person name="Tsai M."/>
            <person name="Ulanovsky L.E."/>
            <person name="Ustaszewska A."/>
            <person name="Vo N."/>
            <person name="White P.S."/>
            <person name="Williams A.L."/>
            <person name="Wills P.L."/>
            <person name="Wu J.-R."/>
            <person name="Wu K."/>
            <person name="Yang J."/>
            <person name="DeJong P."/>
            <person name="Bruce D."/>
            <person name="Doggett N.A."/>
            <person name="Deaven L."/>
            <person name="Schmutz J."/>
            <person name="Grimwood J."/>
            <person name="Richardson P."/>
            <person name="Rokhsar D.S."/>
            <person name="Eichler E.E."/>
            <person name="Gilna P."/>
            <person name="Lucas S.M."/>
            <person name="Myers R.M."/>
            <person name="Rubin E.M."/>
            <person name="Pennacchio L.A."/>
        </authorList>
    </citation>
    <scope>NUCLEOTIDE SEQUENCE [LARGE SCALE GENOMIC DNA]</scope>
</reference>
<proteinExistence type="inferred from homology"/>
<accession>A6NJ64</accession>
<accession>A0A0A6YYH2</accession>
<accession>J3KPX4</accession>
<sequence length="397" mass="45575">MFCCLGYEWLSGGCKTWHSAWVINTLADHHHRGTDFGGSPWLRIIIAFPRSYKVVLTLWTVYLWLSFLKTIFQSENGHDVSTDVQQRARRSNRRRQEGLRSICMHTKKRVSSFPGNKIGLKDVITLRRHVETKGRAKIRKMKVTTKINHHDKINGKRKTAKKQKLSVKECEHAEKERQVSEAEENGKLDMKEIHTYMKMFQRAQELRRRAEDYHKCKIPPSARKALCNWVRMAAAEHRHSSGLPYWPYLTAETLKNRMGHQPPPPTQQHSITDNSLSLKTPPECLLTPLPPSADDNLKTPPECLLTPLPPSAPPSADDNLKTPPLATQEAEAEKPPKPKRWRAAEMESPPEPKRRRAAEVESPPEPKRRRAAEVEPSSPEPKRRRLSKLRTGHCTQA</sequence>
<comment type="subcellular location">
    <subcellularLocation>
        <location evidence="1">Nucleus</location>
    </subcellularLocation>
</comment>
<comment type="similarity">
    <text evidence="3">Belongs to the NPIP family.</text>
</comment>
<name>NPIB2_HUMAN</name>
<feature type="chain" id="PRO_0000340269" description="Nuclear pore complex-interacting protein family member B2">
    <location>
        <begin position="1"/>
        <end position="397"/>
    </location>
</feature>
<feature type="region of interest" description="Disordered" evidence="2">
    <location>
        <begin position="256"/>
        <end position="397"/>
    </location>
</feature>
<feature type="compositionally biased region" description="Polar residues" evidence="2">
    <location>
        <begin position="267"/>
        <end position="277"/>
    </location>
</feature>
<feature type="compositionally biased region" description="Low complexity" evidence="2">
    <location>
        <begin position="278"/>
        <end position="287"/>
    </location>
</feature>
<feature type="compositionally biased region" description="Basic residues" evidence="2">
    <location>
        <begin position="382"/>
        <end position="391"/>
    </location>
</feature>
<organism>
    <name type="scientific">Homo sapiens</name>
    <name type="common">Human</name>
    <dbReference type="NCBI Taxonomy" id="9606"/>
    <lineage>
        <taxon>Eukaryota</taxon>
        <taxon>Metazoa</taxon>
        <taxon>Chordata</taxon>
        <taxon>Craniata</taxon>
        <taxon>Vertebrata</taxon>
        <taxon>Euteleostomi</taxon>
        <taxon>Mammalia</taxon>
        <taxon>Eutheria</taxon>
        <taxon>Euarchontoglires</taxon>
        <taxon>Primates</taxon>
        <taxon>Haplorrhini</taxon>
        <taxon>Catarrhini</taxon>
        <taxon>Hominidae</taxon>
        <taxon>Homo</taxon>
    </lineage>
</organism>
<gene>
    <name evidence="4" type="primary">NPIPB2</name>
</gene>
<keyword id="KW-0539">Nucleus</keyword>
<keyword id="KW-1185">Reference proteome</keyword>
<protein>
    <recommendedName>
        <fullName evidence="4">Nuclear pore complex-interacting protein family member B2</fullName>
    </recommendedName>
</protein>
<evidence type="ECO:0000250" key="1"/>
<evidence type="ECO:0000256" key="2">
    <source>
        <dbReference type="SAM" id="MobiDB-lite"/>
    </source>
</evidence>
<evidence type="ECO:0000305" key="3"/>
<evidence type="ECO:0000312" key="4">
    <source>
        <dbReference type="HGNC" id="HGNC:37451"/>
    </source>
</evidence>
<dbReference type="EMBL" id="AC007216">
    <property type="status" value="NOT_ANNOTATED_CDS"/>
    <property type="molecule type" value="Genomic_DNA"/>
</dbReference>
<dbReference type="CCDS" id="CCDS92110.1"/>
<dbReference type="RefSeq" id="NP_001383414.1">
    <property type="nucleotide sequence ID" value="NM_001396485.1"/>
</dbReference>
<dbReference type="SMR" id="A6NJ64"/>
<dbReference type="FunCoup" id="A6NJ64">
    <property type="interactions" value="33"/>
</dbReference>
<dbReference type="GlyGen" id="A6NJ64">
    <property type="glycosylation" value="1 site"/>
</dbReference>
<dbReference type="iPTMnet" id="A6NJ64"/>
<dbReference type="PhosphoSitePlus" id="A6NJ64"/>
<dbReference type="BioMuta" id="-"/>
<dbReference type="BioMuta" id="ENSG00000234719"/>
<dbReference type="MassIVE" id="A6NJ64"/>
<dbReference type="PaxDb" id="9606-ENSP00000382101"/>
<dbReference type="PeptideAtlas" id="A6NJ64"/>
<dbReference type="Ensembl" id="ENST00000399147.8">
    <property type="protein sequence ID" value="ENSP00000382101.4"/>
    <property type="gene ID" value="ENSG00000234719.9"/>
</dbReference>
<dbReference type="GeneID" id="729978"/>
<dbReference type="MANE-Select" id="ENST00000399147.8">
    <property type="protein sequence ID" value="ENSP00000382101.4"/>
    <property type="RefSeq nucleotide sequence ID" value="NM_001396485.1"/>
    <property type="RefSeq protein sequence ID" value="NP_001383414.1"/>
</dbReference>
<dbReference type="UCSC" id="uc059qyb.1">
    <property type="organism name" value="human"/>
</dbReference>
<dbReference type="AGR" id="HGNC:37451"/>
<dbReference type="GeneCards" id="NPIPB2"/>
<dbReference type="HGNC" id="HGNC:37451">
    <property type="gene designation" value="NPIPB2"/>
</dbReference>
<dbReference type="HPA" id="ENSG00000234719">
    <property type="expression patterns" value="Low tissue specificity"/>
</dbReference>
<dbReference type="neXtProt" id="NX_A6NJ64"/>
<dbReference type="VEuPathDB" id="HostDB:ENSG00000234719"/>
<dbReference type="GeneTree" id="ENSGT00540000072033"/>
<dbReference type="InParanoid" id="A6NJ64"/>
<dbReference type="PAN-GO" id="A6NJ64">
    <property type="GO annotations" value="1 GO annotation based on evolutionary models"/>
</dbReference>
<dbReference type="PhylomeDB" id="A6NJ64"/>
<dbReference type="TreeFam" id="TF333389"/>
<dbReference type="Pharos" id="A6NJ64">
    <property type="development level" value="Tdark"/>
</dbReference>
<dbReference type="Proteomes" id="UP000005640">
    <property type="component" value="Chromosome 16"/>
</dbReference>
<dbReference type="RNAct" id="A6NJ64">
    <property type="molecule type" value="protein"/>
</dbReference>
<dbReference type="Bgee" id="ENSG00000234719">
    <property type="expression patterns" value="Expressed in cerebellar vermis and 100 other cell types or tissues"/>
</dbReference>
<dbReference type="ExpressionAtlas" id="A6NJ64">
    <property type="expression patterns" value="baseline and differential"/>
</dbReference>
<dbReference type="GO" id="GO:0005634">
    <property type="term" value="C:nucleus"/>
    <property type="evidence" value="ECO:0007669"/>
    <property type="project" value="UniProtKB-SubCell"/>
</dbReference>
<dbReference type="InterPro" id="IPR009443">
    <property type="entry name" value="NPIP"/>
</dbReference>
<dbReference type="InterPro" id="IPR054697">
    <property type="entry name" value="NPIP_N"/>
</dbReference>
<dbReference type="PANTHER" id="PTHR15438">
    <property type="entry name" value="NUCLEAR PORE COMPLEX INTERACTING PROTEIN"/>
    <property type="match status" value="1"/>
</dbReference>
<dbReference type="PANTHER" id="PTHR15438:SF14">
    <property type="entry name" value="NUCLEAR PORE COMPLEX-INTERACTING PROTEIN FAMILY MEMBER A1-RELATED"/>
    <property type="match status" value="1"/>
</dbReference>
<dbReference type="Pfam" id="PF06409">
    <property type="entry name" value="NPIP"/>
    <property type="match status" value="1"/>
</dbReference>